<proteinExistence type="evidence at protein level"/>
<feature type="chain" id="PRO_1000130819" description="UDP-N-acetylmuramoylalanine--D-glutamate ligase">
    <location>
        <begin position="1"/>
        <end position="448"/>
    </location>
</feature>
<feature type="binding site" evidence="1">
    <location>
        <begin position="112"/>
        <end position="118"/>
    </location>
    <ligand>
        <name>ATP</name>
        <dbReference type="ChEBI" id="CHEBI:30616"/>
    </ligand>
</feature>
<feature type="strand" evidence="2">
    <location>
        <begin position="8"/>
        <end position="12"/>
    </location>
</feature>
<feature type="helix" evidence="2">
    <location>
        <begin position="15"/>
        <end position="27"/>
    </location>
</feature>
<feature type="strand" evidence="2">
    <location>
        <begin position="31"/>
        <end position="40"/>
    </location>
</feature>
<feature type="helix" evidence="2">
    <location>
        <begin position="44"/>
        <end position="46"/>
    </location>
</feature>
<feature type="strand" evidence="2">
    <location>
        <begin position="51"/>
        <end position="57"/>
    </location>
</feature>
<feature type="helix" evidence="2">
    <location>
        <begin position="60"/>
        <end position="64"/>
    </location>
</feature>
<feature type="strand" evidence="2">
    <location>
        <begin position="67"/>
        <end position="71"/>
    </location>
</feature>
<feature type="helix" evidence="2">
    <location>
        <begin position="80"/>
        <end position="87"/>
    </location>
</feature>
<feature type="strand" evidence="2">
    <location>
        <begin position="91"/>
        <end position="93"/>
    </location>
</feature>
<feature type="helix" evidence="2">
    <location>
        <begin position="95"/>
        <end position="102"/>
    </location>
</feature>
<feature type="strand" evidence="2">
    <location>
        <begin position="107"/>
        <end position="111"/>
    </location>
</feature>
<feature type="helix" evidence="2">
    <location>
        <begin position="116"/>
        <end position="129"/>
    </location>
</feature>
<feature type="strand" evidence="2">
    <location>
        <begin position="134"/>
        <end position="137"/>
    </location>
</feature>
<feature type="helix" evidence="2">
    <location>
        <begin position="144"/>
        <end position="148"/>
    </location>
</feature>
<feature type="strand" evidence="2">
    <location>
        <begin position="153"/>
        <end position="158"/>
    </location>
</feature>
<feature type="helix" evidence="2">
    <location>
        <begin position="161"/>
        <end position="165"/>
    </location>
</feature>
<feature type="strand" evidence="2">
    <location>
        <begin position="173"/>
        <end position="177"/>
    </location>
</feature>
<feature type="helix" evidence="2">
    <location>
        <begin position="185"/>
        <end position="188"/>
    </location>
</feature>
<feature type="helix" evidence="2">
    <location>
        <begin position="191"/>
        <end position="199"/>
    </location>
</feature>
<feature type="helix" evidence="2">
    <location>
        <begin position="200"/>
        <end position="202"/>
    </location>
</feature>
<feature type="strand" evidence="2">
    <location>
        <begin position="206"/>
        <end position="211"/>
    </location>
</feature>
<feature type="turn" evidence="2">
    <location>
        <begin position="215"/>
        <end position="217"/>
    </location>
</feature>
<feature type="strand" evidence="2">
    <location>
        <begin position="227"/>
        <end position="230"/>
    </location>
</feature>
<feature type="strand" evidence="2">
    <location>
        <begin position="240"/>
        <end position="244"/>
    </location>
</feature>
<feature type="strand" evidence="2">
    <location>
        <begin position="250"/>
        <end position="254"/>
    </location>
</feature>
<feature type="strand" evidence="2">
    <location>
        <begin position="257"/>
        <end position="261"/>
    </location>
</feature>
<feature type="helix" evidence="2">
    <location>
        <begin position="262"/>
        <end position="264"/>
    </location>
</feature>
<feature type="strand" evidence="2">
    <location>
        <begin position="265"/>
        <end position="267"/>
    </location>
</feature>
<feature type="helix" evidence="2">
    <location>
        <begin position="270"/>
        <end position="285"/>
    </location>
</feature>
<feature type="helix" evidence="2">
    <location>
        <begin position="290"/>
        <end position="299"/>
    </location>
</feature>
<feature type="strand" evidence="2">
    <location>
        <begin position="306"/>
        <end position="313"/>
    </location>
</feature>
<feature type="strand" evidence="2">
    <location>
        <begin position="316"/>
        <end position="320"/>
    </location>
</feature>
<feature type="helix" evidence="2">
    <location>
        <begin position="327"/>
        <end position="341"/>
    </location>
</feature>
<feature type="turn" evidence="2">
    <location>
        <begin position="342"/>
        <end position="345"/>
    </location>
</feature>
<feature type="strand" evidence="2">
    <location>
        <begin position="348"/>
        <end position="355"/>
    </location>
</feature>
<feature type="helix" evidence="2">
    <location>
        <begin position="362"/>
        <end position="364"/>
    </location>
</feature>
<feature type="helix" evidence="2">
    <location>
        <begin position="365"/>
        <end position="371"/>
    </location>
</feature>
<feature type="strand" evidence="2">
    <location>
        <begin position="372"/>
        <end position="379"/>
    </location>
</feature>
<feature type="helix" evidence="2">
    <location>
        <begin position="382"/>
        <end position="389"/>
    </location>
</feature>
<feature type="strand" evidence="2">
    <location>
        <begin position="392"/>
        <end position="397"/>
    </location>
</feature>
<feature type="helix" evidence="2">
    <location>
        <begin position="401"/>
        <end position="411"/>
    </location>
</feature>
<feature type="strand" evidence="2">
    <location>
        <begin position="417"/>
        <end position="420"/>
    </location>
</feature>
<feature type="strand" evidence="2">
    <location>
        <begin position="423"/>
        <end position="425"/>
    </location>
</feature>
<feature type="turn" evidence="2">
    <location>
        <begin position="427"/>
        <end position="429"/>
    </location>
</feature>
<feature type="strand" evidence="2">
    <location>
        <begin position="430"/>
        <end position="432"/>
    </location>
</feature>
<feature type="helix" evidence="2">
    <location>
        <begin position="433"/>
        <end position="446"/>
    </location>
</feature>
<dbReference type="EC" id="6.3.2.9" evidence="1"/>
<dbReference type="EMBL" id="CP001172">
    <property type="protein sequence ID" value="ACJ58865.1"/>
    <property type="molecule type" value="Genomic_DNA"/>
</dbReference>
<dbReference type="RefSeq" id="WP_000908240.1">
    <property type="nucleotide sequence ID" value="NZ_CP001172.1"/>
</dbReference>
<dbReference type="PDB" id="7SIR">
    <property type="method" value="X-ray"/>
    <property type="resolution" value="1.65 A"/>
    <property type="chains" value="A=1-448"/>
</dbReference>
<dbReference type="PDB" id="7TI7">
    <property type="method" value="X-ray"/>
    <property type="resolution" value="1.50 A"/>
    <property type="chains" value="A=1-448"/>
</dbReference>
<dbReference type="PDBsum" id="7SIR"/>
<dbReference type="PDBsum" id="7TI7"/>
<dbReference type="SMR" id="B7H1N2"/>
<dbReference type="HOGENOM" id="CLU_032540_1_0_6"/>
<dbReference type="UniPathway" id="UPA00219"/>
<dbReference type="Proteomes" id="UP000006924">
    <property type="component" value="Chromosome"/>
</dbReference>
<dbReference type="GO" id="GO:0005737">
    <property type="term" value="C:cytoplasm"/>
    <property type="evidence" value="ECO:0007669"/>
    <property type="project" value="UniProtKB-SubCell"/>
</dbReference>
<dbReference type="GO" id="GO:0005524">
    <property type="term" value="F:ATP binding"/>
    <property type="evidence" value="ECO:0007669"/>
    <property type="project" value="UniProtKB-UniRule"/>
</dbReference>
<dbReference type="GO" id="GO:0008764">
    <property type="term" value="F:UDP-N-acetylmuramoylalanine-D-glutamate ligase activity"/>
    <property type="evidence" value="ECO:0007669"/>
    <property type="project" value="UniProtKB-UniRule"/>
</dbReference>
<dbReference type="GO" id="GO:0051301">
    <property type="term" value="P:cell division"/>
    <property type="evidence" value="ECO:0007669"/>
    <property type="project" value="UniProtKB-KW"/>
</dbReference>
<dbReference type="GO" id="GO:0071555">
    <property type="term" value="P:cell wall organization"/>
    <property type="evidence" value="ECO:0007669"/>
    <property type="project" value="UniProtKB-KW"/>
</dbReference>
<dbReference type="GO" id="GO:0009252">
    <property type="term" value="P:peptidoglycan biosynthetic process"/>
    <property type="evidence" value="ECO:0007669"/>
    <property type="project" value="UniProtKB-UniRule"/>
</dbReference>
<dbReference type="GO" id="GO:0008360">
    <property type="term" value="P:regulation of cell shape"/>
    <property type="evidence" value="ECO:0007669"/>
    <property type="project" value="UniProtKB-KW"/>
</dbReference>
<dbReference type="Gene3D" id="3.90.190.20">
    <property type="entry name" value="Mur ligase, C-terminal domain"/>
    <property type="match status" value="1"/>
</dbReference>
<dbReference type="Gene3D" id="3.40.1190.10">
    <property type="entry name" value="Mur-like, catalytic domain"/>
    <property type="match status" value="1"/>
</dbReference>
<dbReference type="Gene3D" id="3.40.50.720">
    <property type="entry name" value="NAD(P)-binding Rossmann-like Domain"/>
    <property type="match status" value="1"/>
</dbReference>
<dbReference type="HAMAP" id="MF_00639">
    <property type="entry name" value="MurD"/>
    <property type="match status" value="1"/>
</dbReference>
<dbReference type="InterPro" id="IPR036565">
    <property type="entry name" value="Mur-like_cat_sf"/>
</dbReference>
<dbReference type="InterPro" id="IPR004101">
    <property type="entry name" value="Mur_ligase_C"/>
</dbReference>
<dbReference type="InterPro" id="IPR036615">
    <property type="entry name" value="Mur_ligase_C_dom_sf"/>
</dbReference>
<dbReference type="InterPro" id="IPR013221">
    <property type="entry name" value="Mur_ligase_cen"/>
</dbReference>
<dbReference type="InterPro" id="IPR005762">
    <property type="entry name" value="MurD"/>
</dbReference>
<dbReference type="NCBIfam" id="TIGR01087">
    <property type="entry name" value="murD"/>
    <property type="match status" value="1"/>
</dbReference>
<dbReference type="PANTHER" id="PTHR43692">
    <property type="entry name" value="UDP-N-ACETYLMURAMOYLALANINE--D-GLUTAMATE LIGASE"/>
    <property type="match status" value="1"/>
</dbReference>
<dbReference type="PANTHER" id="PTHR43692:SF1">
    <property type="entry name" value="UDP-N-ACETYLMURAMOYLALANINE--D-GLUTAMATE LIGASE"/>
    <property type="match status" value="1"/>
</dbReference>
<dbReference type="Pfam" id="PF02875">
    <property type="entry name" value="Mur_ligase_C"/>
    <property type="match status" value="1"/>
</dbReference>
<dbReference type="Pfam" id="PF08245">
    <property type="entry name" value="Mur_ligase_M"/>
    <property type="match status" value="1"/>
</dbReference>
<dbReference type="Pfam" id="PF21799">
    <property type="entry name" value="MurD-like_N"/>
    <property type="match status" value="1"/>
</dbReference>
<dbReference type="SUPFAM" id="SSF51984">
    <property type="entry name" value="MurCD N-terminal domain"/>
    <property type="match status" value="1"/>
</dbReference>
<dbReference type="SUPFAM" id="SSF53623">
    <property type="entry name" value="MurD-like peptide ligases, catalytic domain"/>
    <property type="match status" value="1"/>
</dbReference>
<dbReference type="SUPFAM" id="SSF53244">
    <property type="entry name" value="MurD-like peptide ligases, peptide-binding domain"/>
    <property type="match status" value="1"/>
</dbReference>
<keyword id="KW-0002">3D-structure</keyword>
<keyword id="KW-0067">ATP-binding</keyword>
<keyword id="KW-0131">Cell cycle</keyword>
<keyword id="KW-0132">Cell division</keyword>
<keyword id="KW-0133">Cell shape</keyword>
<keyword id="KW-0961">Cell wall biogenesis/degradation</keyword>
<keyword id="KW-0963">Cytoplasm</keyword>
<keyword id="KW-0436">Ligase</keyword>
<keyword id="KW-0547">Nucleotide-binding</keyword>
<keyword id="KW-0573">Peptidoglycan synthesis</keyword>
<comment type="function">
    <text evidence="1">Cell wall formation. Catalyzes the addition of glutamate to the nucleotide precursor UDP-N-acetylmuramoyl-L-alanine (UMA).</text>
</comment>
<comment type="catalytic activity">
    <reaction evidence="1">
        <text>UDP-N-acetyl-alpha-D-muramoyl-L-alanine + D-glutamate + ATP = UDP-N-acetyl-alpha-D-muramoyl-L-alanyl-D-glutamate + ADP + phosphate + H(+)</text>
        <dbReference type="Rhea" id="RHEA:16429"/>
        <dbReference type="ChEBI" id="CHEBI:15378"/>
        <dbReference type="ChEBI" id="CHEBI:29986"/>
        <dbReference type="ChEBI" id="CHEBI:30616"/>
        <dbReference type="ChEBI" id="CHEBI:43474"/>
        <dbReference type="ChEBI" id="CHEBI:83898"/>
        <dbReference type="ChEBI" id="CHEBI:83900"/>
        <dbReference type="ChEBI" id="CHEBI:456216"/>
        <dbReference type="EC" id="6.3.2.9"/>
    </reaction>
</comment>
<comment type="pathway">
    <text evidence="1">Cell wall biogenesis; peptidoglycan biosynthesis.</text>
</comment>
<comment type="subcellular location">
    <subcellularLocation>
        <location evidence="1">Cytoplasm</location>
    </subcellularLocation>
</comment>
<comment type="similarity">
    <text evidence="1">Belongs to the MurCDEF family.</text>
</comment>
<name>MURD_ACIB3</name>
<protein>
    <recommendedName>
        <fullName evidence="1">UDP-N-acetylmuramoylalanine--D-glutamate ligase</fullName>
        <ecNumber evidence="1">6.3.2.9</ecNumber>
    </recommendedName>
    <alternativeName>
        <fullName evidence="1">D-glutamic acid-adding enzyme</fullName>
    </alternativeName>
    <alternativeName>
        <fullName evidence="1">UDP-N-acetylmuramoyl-L-alanyl-D-glutamate synthetase</fullName>
    </alternativeName>
</protein>
<reference key="1">
    <citation type="journal article" date="2008" name="J. Bacteriol.">
        <title>Comparative genome sequence analysis of multidrug-resistant Acinetobacter baumannii.</title>
        <authorList>
            <person name="Adams M.D."/>
            <person name="Goglin K."/>
            <person name="Molyneaux N."/>
            <person name="Hujer K.M."/>
            <person name="Lavender H."/>
            <person name="Jamison J.J."/>
            <person name="MacDonald I.J."/>
            <person name="Martin K.M."/>
            <person name="Russo T."/>
            <person name="Campagnari A.A."/>
            <person name="Hujer A.M."/>
            <person name="Bonomo R.A."/>
            <person name="Gill S.R."/>
        </authorList>
    </citation>
    <scope>NUCLEOTIDE SEQUENCE [LARGE SCALE GENOMIC DNA]</scope>
    <source>
        <strain>AB307-0294</strain>
    </source>
</reference>
<evidence type="ECO:0000255" key="1">
    <source>
        <dbReference type="HAMAP-Rule" id="MF_00639"/>
    </source>
</evidence>
<evidence type="ECO:0007829" key="2">
    <source>
        <dbReference type="PDB" id="7TI7"/>
    </source>
</evidence>
<accession>B7H1N2</accession>
<organism>
    <name type="scientific">Acinetobacter baumannii (strain AB307-0294)</name>
    <dbReference type="NCBI Taxonomy" id="557600"/>
    <lineage>
        <taxon>Bacteria</taxon>
        <taxon>Pseudomonadati</taxon>
        <taxon>Pseudomonadota</taxon>
        <taxon>Gammaproteobacteria</taxon>
        <taxon>Moraxellales</taxon>
        <taxon>Moraxellaceae</taxon>
        <taxon>Acinetobacter</taxon>
        <taxon>Acinetobacter calcoaceticus/baumannii complex</taxon>
    </lineage>
</organism>
<sequence length="448" mass="47932">MLIQRGGLKVVAGLGISGVSAVNFLHEQGYQVAVTDSRPTPPGHDQIPAGVKTSFGQLDQELLLQAEEIILSPGLAPQLPEIQAAIAKGISVVGDIQLLRRATDVPIVAITGSNAKSTVTTLIGLMAKDAGKKVAVGGNLGRPALDLLKDQPELLVLELSSFQLETTSHLNAEVAVVLNMSEDHLDRHGNMLGYHQAKHRIFQGAKKVVFNRDDALSRPLVPDTTPMQSFGLNAPDLNQYGVLRDADGTLWLARGLQRLIKSSDLYIQGMHNVANALACLALGEAIGLPMESMLETLKQFKGLEHRCEYVKTVHDVRYYNDSKGTNVGATLAAIDGLGAAIEVKKGKVALILGGQGKGQDFGPLRSSIEKYAKVVVLIGEDAPVIEQAIQGATKILHAATLKEAVELCQRETQAEDVVLLSPACASFDMFKSYNDRGQQFVACVNSLV</sequence>
<gene>
    <name evidence="1" type="primary">murD</name>
    <name type="ordered locus">ABBFA_003287</name>
</gene>